<dbReference type="EC" id="2.6.1.52" evidence="1"/>
<dbReference type="EMBL" id="CP000238">
    <property type="protein sequence ID" value="ABF14224.1"/>
    <property type="molecule type" value="Genomic_DNA"/>
</dbReference>
<dbReference type="RefSeq" id="WP_011520435.1">
    <property type="nucleotide sequence ID" value="NC_007984.1"/>
</dbReference>
<dbReference type="SMR" id="Q1LTL2"/>
<dbReference type="STRING" id="374463.BCI_0252"/>
<dbReference type="KEGG" id="bci:BCI_0252"/>
<dbReference type="HOGENOM" id="CLU_034866_0_2_6"/>
<dbReference type="OrthoDB" id="9809412at2"/>
<dbReference type="UniPathway" id="UPA00135">
    <property type="reaction ID" value="UER00197"/>
</dbReference>
<dbReference type="UniPathway" id="UPA00244">
    <property type="reaction ID" value="UER00311"/>
</dbReference>
<dbReference type="Proteomes" id="UP000002427">
    <property type="component" value="Chromosome"/>
</dbReference>
<dbReference type="GO" id="GO:0005737">
    <property type="term" value="C:cytoplasm"/>
    <property type="evidence" value="ECO:0007669"/>
    <property type="project" value="UniProtKB-SubCell"/>
</dbReference>
<dbReference type="GO" id="GO:0004648">
    <property type="term" value="F:O-phospho-L-serine:2-oxoglutarate aminotransferase activity"/>
    <property type="evidence" value="ECO:0007669"/>
    <property type="project" value="UniProtKB-UniRule"/>
</dbReference>
<dbReference type="GO" id="GO:0030170">
    <property type="term" value="F:pyridoxal phosphate binding"/>
    <property type="evidence" value="ECO:0007669"/>
    <property type="project" value="UniProtKB-UniRule"/>
</dbReference>
<dbReference type="GO" id="GO:0006564">
    <property type="term" value="P:L-serine biosynthetic process"/>
    <property type="evidence" value="ECO:0007669"/>
    <property type="project" value="UniProtKB-UniRule"/>
</dbReference>
<dbReference type="GO" id="GO:0008615">
    <property type="term" value="P:pyridoxine biosynthetic process"/>
    <property type="evidence" value="ECO:0007669"/>
    <property type="project" value="UniProtKB-UniRule"/>
</dbReference>
<dbReference type="FunFam" id="3.40.640.10:FF:000010">
    <property type="entry name" value="Phosphoserine aminotransferase"/>
    <property type="match status" value="1"/>
</dbReference>
<dbReference type="FunFam" id="3.90.1150.10:FF:000006">
    <property type="entry name" value="Phosphoserine aminotransferase"/>
    <property type="match status" value="1"/>
</dbReference>
<dbReference type="Gene3D" id="3.90.1150.10">
    <property type="entry name" value="Aspartate Aminotransferase, domain 1"/>
    <property type="match status" value="1"/>
</dbReference>
<dbReference type="Gene3D" id="3.40.640.10">
    <property type="entry name" value="Type I PLP-dependent aspartate aminotransferase-like (Major domain)"/>
    <property type="match status" value="1"/>
</dbReference>
<dbReference type="HAMAP" id="MF_00160">
    <property type="entry name" value="SerC_aminotrans_5"/>
    <property type="match status" value="1"/>
</dbReference>
<dbReference type="InterPro" id="IPR000192">
    <property type="entry name" value="Aminotrans_V_dom"/>
</dbReference>
<dbReference type="InterPro" id="IPR020578">
    <property type="entry name" value="Aminotrans_V_PyrdxlP_BS"/>
</dbReference>
<dbReference type="InterPro" id="IPR022278">
    <property type="entry name" value="Pser_aminoTfrase"/>
</dbReference>
<dbReference type="InterPro" id="IPR015424">
    <property type="entry name" value="PyrdxlP-dep_Trfase"/>
</dbReference>
<dbReference type="InterPro" id="IPR015421">
    <property type="entry name" value="PyrdxlP-dep_Trfase_major"/>
</dbReference>
<dbReference type="InterPro" id="IPR015422">
    <property type="entry name" value="PyrdxlP-dep_Trfase_small"/>
</dbReference>
<dbReference type="NCBIfam" id="NF003764">
    <property type="entry name" value="PRK05355.1"/>
    <property type="match status" value="1"/>
</dbReference>
<dbReference type="NCBIfam" id="TIGR01364">
    <property type="entry name" value="serC_1"/>
    <property type="match status" value="1"/>
</dbReference>
<dbReference type="PANTHER" id="PTHR43247">
    <property type="entry name" value="PHOSPHOSERINE AMINOTRANSFERASE"/>
    <property type="match status" value="1"/>
</dbReference>
<dbReference type="PANTHER" id="PTHR43247:SF1">
    <property type="entry name" value="PHOSPHOSERINE AMINOTRANSFERASE"/>
    <property type="match status" value="1"/>
</dbReference>
<dbReference type="Pfam" id="PF00266">
    <property type="entry name" value="Aminotran_5"/>
    <property type="match status" value="1"/>
</dbReference>
<dbReference type="PIRSF" id="PIRSF000525">
    <property type="entry name" value="SerC"/>
    <property type="match status" value="1"/>
</dbReference>
<dbReference type="SUPFAM" id="SSF53383">
    <property type="entry name" value="PLP-dependent transferases"/>
    <property type="match status" value="1"/>
</dbReference>
<dbReference type="PROSITE" id="PS00595">
    <property type="entry name" value="AA_TRANSFER_CLASS_5"/>
    <property type="match status" value="1"/>
</dbReference>
<evidence type="ECO:0000255" key="1">
    <source>
        <dbReference type="HAMAP-Rule" id="MF_00160"/>
    </source>
</evidence>
<proteinExistence type="inferred from homology"/>
<protein>
    <recommendedName>
        <fullName evidence="1">Phosphoserine aminotransferase</fullName>
        <ecNumber evidence="1">2.6.1.52</ecNumber>
    </recommendedName>
    <alternativeName>
        <fullName evidence="1">Phosphohydroxythreonine aminotransferase</fullName>
        <shortName evidence="1">PSAT</shortName>
    </alternativeName>
</protein>
<comment type="function">
    <text evidence="1">Catalyzes the reversible conversion of 3-phosphohydroxypyruvate to phosphoserine and of 3-hydroxy-2-oxo-4-phosphonooxybutanoate to phosphohydroxythreonine.</text>
</comment>
<comment type="catalytic activity">
    <reaction evidence="1">
        <text>O-phospho-L-serine + 2-oxoglutarate = 3-phosphooxypyruvate + L-glutamate</text>
        <dbReference type="Rhea" id="RHEA:14329"/>
        <dbReference type="ChEBI" id="CHEBI:16810"/>
        <dbReference type="ChEBI" id="CHEBI:18110"/>
        <dbReference type="ChEBI" id="CHEBI:29985"/>
        <dbReference type="ChEBI" id="CHEBI:57524"/>
        <dbReference type="EC" id="2.6.1.52"/>
    </reaction>
</comment>
<comment type="catalytic activity">
    <reaction evidence="1">
        <text>4-(phosphooxy)-L-threonine + 2-oxoglutarate = (R)-3-hydroxy-2-oxo-4-phosphooxybutanoate + L-glutamate</text>
        <dbReference type="Rhea" id="RHEA:16573"/>
        <dbReference type="ChEBI" id="CHEBI:16810"/>
        <dbReference type="ChEBI" id="CHEBI:29985"/>
        <dbReference type="ChEBI" id="CHEBI:58452"/>
        <dbReference type="ChEBI" id="CHEBI:58538"/>
        <dbReference type="EC" id="2.6.1.52"/>
    </reaction>
</comment>
<comment type="cofactor">
    <cofactor evidence="1">
        <name>pyridoxal 5'-phosphate</name>
        <dbReference type="ChEBI" id="CHEBI:597326"/>
    </cofactor>
    <text evidence="1">Binds 1 pyridoxal phosphate per subunit.</text>
</comment>
<comment type="pathway">
    <text evidence="1">Amino-acid biosynthesis; L-serine biosynthesis; L-serine from 3-phospho-D-glycerate: step 2/3.</text>
</comment>
<comment type="pathway">
    <text evidence="1">Cofactor biosynthesis; pyridoxine 5'-phosphate biosynthesis; pyridoxine 5'-phosphate from D-erythrose 4-phosphate: step 3/5.</text>
</comment>
<comment type="subunit">
    <text evidence="1">Homodimer.</text>
</comment>
<comment type="subcellular location">
    <subcellularLocation>
        <location evidence="1">Cytoplasm</location>
    </subcellularLocation>
</comment>
<comment type="similarity">
    <text evidence="1">Belongs to the class-V pyridoxal-phosphate-dependent aminotransferase family. SerC subfamily.</text>
</comment>
<name>SERC_BAUCH</name>
<accession>Q1LTL2</accession>
<organism>
    <name type="scientific">Baumannia cicadellinicola subsp. Homalodisca coagulata</name>
    <dbReference type="NCBI Taxonomy" id="374463"/>
    <lineage>
        <taxon>Bacteria</taxon>
        <taxon>Pseudomonadati</taxon>
        <taxon>Pseudomonadota</taxon>
        <taxon>Gammaproteobacteria</taxon>
        <taxon>Candidatus Palibaumannia</taxon>
    </lineage>
</organism>
<sequence length="363" mass="40759">MNTVFNFSSGPAKLPIEVLQQAQQELCNWHGLGTSIMEISHRSDEFRQVAYESEQDLRSLLNIPDNYQVLFCHGGARAQFAAVPMNLLGKSKIADYIHGGYWSYSAAKEAHKYCQPRMIEVMTYINGWRGIKPMVEWVLSPDNVAYVHYCPNETIDGLTIDELPDFGNKIVVADFSSAILARPIDVSKYGVIYASAQKNIGPAGLAIVIIRDDLLINRASTKLPSILNYQLLANNKSMFNTPPTFAWYVSGLVFKWLKVQGGLVEIEKNNRAKAILLYNTIDNSEFYYNNILPVNRSYMNVPFYLANSALDDLFIIEARNAGLYALKGHRVAGGMRAALYNAMPLEGVKTLVQFMHNFACRYG</sequence>
<feature type="chain" id="PRO_1000203512" description="Phosphoserine aminotransferase">
    <location>
        <begin position="1"/>
        <end position="363"/>
    </location>
</feature>
<feature type="binding site" evidence="1">
    <location>
        <position position="9"/>
    </location>
    <ligand>
        <name>L-glutamate</name>
        <dbReference type="ChEBI" id="CHEBI:29985"/>
    </ligand>
</feature>
<feature type="binding site" evidence="1">
    <location>
        <position position="42"/>
    </location>
    <ligand>
        <name>L-glutamate</name>
        <dbReference type="ChEBI" id="CHEBI:29985"/>
    </ligand>
</feature>
<feature type="binding site" evidence="1">
    <location>
        <begin position="76"/>
        <end position="77"/>
    </location>
    <ligand>
        <name>pyridoxal 5'-phosphate</name>
        <dbReference type="ChEBI" id="CHEBI:597326"/>
    </ligand>
</feature>
<feature type="binding site" evidence="1">
    <location>
        <position position="102"/>
    </location>
    <ligand>
        <name>pyridoxal 5'-phosphate</name>
        <dbReference type="ChEBI" id="CHEBI:597326"/>
    </ligand>
</feature>
<feature type="binding site" evidence="1">
    <location>
        <position position="154"/>
    </location>
    <ligand>
        <name>pyridoxal 5'-phosphate</name>
        <dbReference type="ChEBI" id="CHEBI:597326"/>
    </ligand>
</feature>
<feature type="binding site" evidence="1">
    <location>
        <position position="174"/>
    </location>
    <ligand>
        <name>pyridoxal 5'-phosphate</name>
        <dbReference type="ChEBI" id="CHEBI:597326"/>
    </ligand>
</feature>
<feature type="binding site" evidence="1">
    <location>
        <position position="197"/>
    </location>
    <ligand>
        <name>pyridoxal 5'-phosphate</name>
        <dbReference type="ChEBI" id="CHEBI:597326"/>
    </ligand>
</feature>
<feature type="binding site" evidence="1">
    <location>
        <begin position="240"/>
        <end position="241"/>
    </location>
    <ligand>
        <name>pyridoxal 5'-phosphate</name>
        <dbReference type="ChEBI" id="CHEBI:597326"/>
    </ligand>
</feature>
<feature type="modified residue" description="N6-(pyridoxal phosphate)lysine" evidence="1">
    <location>
        <position position="198"/>
    </location>
</feature>
<reference key="1">
    <citation type="journal article" date="2006" name="PLoS Biol.">
        <title>Metabolic complementarity and genomics of the dual bacterial symbiosis of sharpshooters.</title>
        <authorList>
            <person name="Wu D."/>
            <person name="Daugherty S.C."/>
            <person name="Van Aken S.E."/>
            <person name="Pai G.H."/>
            <person name="Watkins K.L."/>
            <person name="Khouri H."/>
            <person name="Tallon L.J."/>
            <person name="Zaborsky J.M."/>
            <person name="Dunbar H.E."/>
            <person name="Tran P.L."/>
            <person name="Moran N.A."/>
            <person name="Eisen J.A."/>
        </authorList>
    </citation>
    <scope>NUCLEOTIDE SEQUENCE [LARGE SCALE GENOMIC DNA]</scope>
</reference>
<gene>
    <name evidence="1" type="primary">serC</name>
    <name type="ordered locus">BCI_0252</name>
</gene>
<keyword id="KW-0028">Amino-acid biosynthesis</keyword>
<keyword id="KW-0032">Aminotransferase</keyword>
<keyword id="KW-0963">Cytoplasm</keyword>
<keyword id="KW-0663">Pyridoxal phosphate</keyword>
<keyword id="KW-0664">Pyridoxine biosynthesis</keyword>
<keyword id="KW-1185">Reference proteome</keyword>
<keyword id="KW-0718">Serine biosynthesis</keyword>
<keyword id="KW-0808">Transferase</keyword>